<evidence type="ECO:0000269" key="1">
    <source>
    </source>
</evidence>
<evidence type="ECO:0000269" key="2">
    <source>
    </source>
</evidence>
<evidence type="ECO:0000305" key="3"/>
<organism>
    <name type="scientific">Saccharomyces cerevisiae (strain ATCC 204508 / S288c)</name>
    <name type="common">Baker's yeast</name>
    <dbReference type="NCBI Taxonomy" id="559292"/>
    <lineage>
        <taxon>Eukaryota</taxon>
        <taxon>Fungi</taxon>
        <taxon>Dikarya</taxon>
        <taxon>Ascomycota</taxon>
        <taxon>Saccharomycotina</taxon>
        <taxon>Saccharomycetes</taxon>
        <taxon>Saccharomycetales</taxon>
        <taxon>Saccharomycetaceae</taxon>
        <taxon>Saccharomyces</taxon>
    </lineage>
</organism>
<gene>
    <name type="primary">SPO22</name>
    <name type="ordered locus">YIL073C</name>
</gene>
<reference key="1">
    <citation type="journal article" date="1997" name="Nature">
        <title>The nucleotide sequence of Saccharomyces cerevisiae chromosome IX.</title>
        <authorList>
            <person name="Churcher C.M."/>
            <person name="Bowman S."/>
            <person name="Badcock K."/>
            <person name="Bankier A.T."/>
            <person name="Brown D."/>
            <person name="Chillingworth T."/>
            <person name="Connor R."/>
            <person name="Devlin K."/>
            <person name="Gentles S."/>
            <person name="Hamlin N."/>
            <person name="Harris D.E."/>
            <person name="Horsnell T."/>
            <person name="Hunt S."/>
            <person name="Jagels K."/>
            <person name="Jones M."/>
            <person name="Lye G."/>
            <person name="Moule S."/>
            <person name="Odell C."/>
            <person name="Pearson D."/>
            <person name="Rajandream M.A."/>
            <person name="Rice P."/>
            <person name="Rowley N."/>
            <person name="Skelton J."/>
            <person name="Smith V."/>
            <person name="Walsh S.V."/>
            <person name="Whitehead S."/>
            <person name="Barrell B.G."/>
        </authorList>
    </citation>
    <scope>NUCLEOTIDE SEQUENCE [LARGE SCALE GENOMIC DNA]</scope>
    <source>
        <strain>ATCC 204508 / S288c</strain>
    </source>
</reference>
<reference key="2">
    <citation type="journal article" date="2014" name="G3 (Bethesda)">
        <title>The reference genome sequence of Saccharomyces cerevisiae: Then and now.</title>
        <authorList>
            <person name="Engel S.R."/>
            <person name="Dietrich F.S."/>
            <person name="Fisk D.G."/>
            <person name="Binkley G."/>
            <person name="Balakrishnan R."/>
            <person name="Costanzo M.C."/>
            <person name="Dwight S.S."/>
            <person name="Hitz B.C."/>
            <person name="Karra K."/>
            <person name="Nash R.S."/>
            <person name="Weng S."/>
            <person name="Wong E.D."/>
            <person name="Lloyd P."/>
            <person name="Skrzypek M.S."/>
            <person name="Miyasato S.R."/>
            <person name="Simison M."/>
            <person name="Cherry J.M."/>
        </authorList>
    </citation>
    <scope>GENOME REANNOTATION</scope>
    <source>
        <strain>ATCC 204508 / S288c</strain>
    </source>
</reference>
<reference key="3">
    <citation type="journal article" date="2000" name="Nat. Genet.">
        <title>The core meiotic transcriptome in budding yeasts.</title>
        <authorList>
            <person name="Primig M."/>
            <person name="Williams R.M."/>
            <person name="Winzeler E.A."/>
            <person name="Tevzadze G.G."/>
            <person name="Conway A.R."/>
            <person name="Hwang S.Y."/>
            <person name="Davis R.W."/>
            <person name="Esposito R.E."/>
        </authorList>
    </citation>
    <scope>FUNCTION</scope>
</reference>
<reference key="4">
    <citation type="journal article" date="2001" name="Curr. Biol.">
        <title>A screen for genes required for meiosis and spore formation based on whole-genome expression.</title>
        <authorList>
            <person name="Rabitsch K.P."/>
            <person name="Toth A."/>
            <person name="Galova M."/>
            <person name="Schleiffer A."/>
            <person name="Schaffner G."/>
            <person name="Aigner E."/>
            <person name="Rupp C."/>
            <person name="Penkner A.M."/>
            <person name="Moreno-Borchart A.C."/>
            <person name="Primig M."/>
            <person name="Esposito R.E."/>
            <person name="Klein F."/>
            <person name="Knop M."/>
            <person name="Nasmyth K."/>
        </authorList>
    </citation>
    <scope>FUNCTION</scope>
</reference>
<reference key="5">
    <citation type="journal article" date="2003" name="Science">
        <title>Finding functional features in Saccharomyces genomes by phylogenetic footprinting.</title>
        <authorList>
            <person name="Cliften P.F."/>
            <person name="Sudarsanam P."/>
            <person name="Desikan A."/>
            <person name="Fulton L."/>
            <person name="Fulton B."/>
            <person name="Majors J."/>
            <person name="Waterston R."/>
            <person name="Cohen B.A."/>
            <person name="Johnston M."/>
        </authorList>
    </citation>
    <scope>IDENTIFICATION OF PROBABLE INITIATION SITE</scope>
</reference>
<feature type="chain" id="PRO_0000072137" description="Sporulation-specific protein 22">
    <location>
        <begin position="1"/>
        <end position="975"/>
    </location>
</feature>
<comment type="function">
    <text evidence="1 2">Involved in chromosome segregation during sporulation.</text>
</comment>
<comment type="similarity">
    <text evidence="3">Belongs to the SPO22 family.</text>
</comment>
<comment type="sequence caution" evidence="3">
    <conflict type="erroneous gene model prediction">
        <sequence resource="EMBL-CDS" id="CAA86097"/>
    </conflict>
</comment>
<sequence length="975" mass="112434">MSDHNVNSTFRKTLVELCETATWITSQVYAAKNLEKNDLITVDNKISALYPIAEKYDRSFRTTTVILDEELILKLENAASSLWNSLTIAMKAEKASDKYFNEVFCKCKIFATKLLSIHEALFRTNTNLLRNFKCYISSFKSASEYRFDDLITNTQQHSEKYLQIINENVESFSNEEKTEFKKLTFEFYLVNFQLYLSENDLDTANIYTAKVNITDNSKYMDADLLIELCRMIYNSTVMLKEINNPETQLVDVNIISFLKDVEKYLELPVENLKSHTDYSNLKYSVLIFMANCLVEGHPQASELEQCDHYLSLLQNEYPNKVDPFILAINLTKRRNIVNPAETIEEILMRMIMSVDVISNFQAVIASINDLSKMNTKFSIVCLDYLLINKLNSKNDSKFLGKAICSRFLITTQSKTMNDSEIAESLENFSTQMERIVSEPLTKHAISCIITLLWNTGKKLEKMEKYVVSIRFYKLALKDIISQNYSDRGKIQRALQVVYNKIEDYSNTVRVYQDMDEVDRQSPLCQLLMLQSFLADDKTEEALTCLQKIKSSEDEKSTDALILAVAECKRKTDLSVQGLLMIFDKLQSKSNSQTISSTSSSQTLSILRYTLQMIVKVSEEEPLETFINYLPTVQKLLQKAVEFLKTVKLLNQLPPDVEKEAIYQQSVAVNEIEWFASFSYNVAVKCLVDQSCESISEFPQYCIQFIDLIPVQDFTFPKMYHFTYWRFKATILQLIIAKEKAKQDQHQKDWDIYEKSEELVNSINVMKKSSEFKDGSSLEDRNTLHECFLEALTIHLESALMMPDQTRILDILKKTELYQDSRVDALLIDISSNMEDLPKGVLIEILETVLKRNMGPEVKERELCSWLRILLENAINLNHEVELRILDRVLKILNINQSSLQDTDGVLQTELETIATYCWNIGVNYIIKDNKSNGIVWCKHSMGFANMVNEGLQEQLYSLWESLASSANIDINSIAK</sequence>
<keyword id="KW-0469">Meiosis</keyword>
<keyword id="KW-1185">Reference proteome</keyword>
<keyword id="KW-0749">Sporulation</keyword>
<name>SPO22_YEAST</name>
<dbReference type="EMBL" id="Z37997">
    <property type="protein sequence ID" value="CAA86097.1"/>
    <property type="status" value="ALT_SEQ"/>
    <property type="molecule type" value="Genomic_DNA"/>
</dbReference>
<dbReference type="EMBL" id="BK006942">
    <property type="protein sequence ID" value="DAA08477.1"/>
    <property type="molecule type" value="Genomic_DNA"/>
</dbReference>
<dbReference type="PIR" id="S48371">
    <property type="entry name" value="S48371"/>
</dbReference>
<dbReference type="RefSeq" id="NP_012192.2">
    <property type="nucleotide sequence ID" value="NM_001179423.1"/>
</dbReference>
<dbReference type="BioGRID" id="34919">
    <property type="interactions" value="106"/>
</dbReference>
<dbReference type="ComplexPortal" id="CPX-1386">
    <property type="entry name" value="Synapsis initiation complex"/>
</dbReference>
<dbReference type="ComplexPortal" id="CPX-5442">
    <property type="entry name" value="ZZS complex"/>
</dbReference>
<dbReference type="FunCoup" id="P40511">
    <property type="interactions" value="70"/>
</dbReference>
<dbReference type="IntAct" id="P40511">
    <property type="interactions" value="1"/>
</dbReference>
<dbReference type="STRING" id="4932.YIL073C"/>
<dbReference type="GlyGen" id="P40511">
    <property type="glycosylation" value="2 sites, 1 O-linked glycan (2 sites)"/>
</dbReference>
<dbReference type="iPTMnet" id="P40511"/>
<dbReference type="PaxDb" id="4932-YIL073C"/>
<dbReference type="PeptideAtlas" id="P40511"/>
<dbReference type="EnsemblFungi" id="YIL073C_mRNA">
    <property type="protein sequence ID" value="YIL073C"/>
    <property type="gene ID" value="YIL073C"/>
</dbReference>
<dbReference type="GeneID" id="854737"/>
<dbReference type="KEGG" id="sce:YIL073C"/>
<dbReference type="AGR" id="SGD:S000001335"/>
<dbReference type="SGD" id="S000001335">
    <property type="gene designation" value="SPO22"/>
</dbReference>
<dbReference type="VEuPathDB" id="FungiDB:YIL073C"/>
<dbReference type="eggNOG" id="KOG4814">
    <property type="taxonomic scope" value="Eukaryota"/>
</dbReference>
<dbReference type="HOGENOM" id="CLU_308367_0_0_1"/>
<dbReference type="InParanoid" id="P40511"/>
<dbReference type="OMA" id="ILMRMIM"/>
<dbReference type="OrthoDB" id="65716at2759"/>
<dbReference type="BioCyc" id="YEAST:MONOMER3O-290031"/>
<dbReference type="BioGRID-ORCS" id="854737">
    <property type="hits" value="0 hits in 10 CRISPR screens"/>
</dbReference>
<dbReference type="PRO" id="PR:P40511"/>
<dbReference type="Proteomes" id="UP000002311">
    <property type="component" value="Chromosome IX"/>
</dbReference>
<dbReference type="RNAct" id="P40511">
    <property type="molecule type" value="protein"/>
</dbReference>
<dbReference type="GO" id="GO:0000794">
    <property type="term" value="C:condensed nuclear chromosome"/>
    <property type="evidence" value="ECO:0000303"/>
    <property type="project" value="ComplexPortal"/>
</dbReference>
<dbReference type="GO" id="GO:0005634">
    <property type="term" value="C:nucleus"/>
    <property type="evidence" value="ECO:0007005"/>
    <property type="project" value="SGD"/>
</dbReference>
<dbReference type="GO" id="GO:0106069">
    <property type="term" value="C:synapsis initiation complex"/>
    <property type="evidence" value="ECO:0000303"/>
    <property type="project" value="ComplexPortal"/>
</dbReference>
<dbReference type="GO" id="GO:0007129">
    <property type="term" value="P:homologous chromosome pairing at meiosis"/>
    <property type="evidence" value="ECO:0000303"/>
    <property type="project" value="ComplexPortal"/>
</dbReference>
<dbReference type="GO" id="GO:0035825">
    <property type="term" value="P:homologous recombination"/>
    <property type="evidence" value="ECO:0000303"/>
    <property type="project" value="ComplexPortal"/>
</dbReference>
<dbReference type="GO" id="GO:0033235">
    <property type="term" value="P:positive regulation of protein sumoylation"/>
    <property type="evidence" value="ECO:0000315"/>
    <property type="project" value="SGD"/>
</dbReference>
<dbReference type="GO" id="GO:0016925">
    <property type="term" value="P:protein sumoylation"/>
    <property type="evidence" value="ECO:0000303"/>
    <property type="project" value="ComplexPortal"/>
</dbReference>
<dbReference type="GO" id="GO:0007131">
    <property type="term" value="P:reciprocal meiotic recombination"/>
    <property type="evidence" value="ECO:0000303"/>
    <property type="project" value="ComplexPortal"/>
</dbReference>
<dbReference type="GO" id="GO:0090173">
    <property type="term" value="P:regulation of synaptonemal complex assembly"/>
    <property type="evidence" value="ECO:0000315"/>
    <property type="project" value="SGD"/>
</dbReference>
<dbReference type="GO" id="GO:0030435">
    <property type="term" value="P:sporulation resulting in formation of a cellular spore"/>
    <property type="evidence" value="ECO:0007669"/>
    <property type="project" value="UniProtKB-KW"/>
</dbReference>
<dbReference type="InterPro" id="IPR039057">
    <property type="entry name" value="Spo22/ZIP4"/>
</dbReference>
<dbReference type="InterPro" id="IPR013940">
    <property type="entry name" value="Spo22/ZIP4/TEX11"/>
</dbReference>
<dbReference type="PANTHER" id="PTHR40375">
    <property type="entry name" value="SPORULATION-SPECIFIC PROTEIN 22"/>
    <property type="match status" value="1"/>
</dbReference>
<dbReference type="PANTHER" id="PTHR40375:SF2">
    <property type="entry name" value="SPORULATION-SPECIFIC PROTEIN 22"/>
    <property type="match status" value="1"/>
</dbReference>
<dbReference type="Pfam" id="PF08631">
    <property type="entry name" value="SPO22"/>
    <property type="match status" value="1"/>
</dbReference>
<protein>
    <recommendedName>
        <fullName>Sporulation-specific protein 22</fullName>
    </recommendedName>
</protein>
<proteinExistence type="inferred from homology"/>
<accession>P40511</accession>
<accession>D6VVL1</accession>